<reference key="1">
    <citation type="journal article" date="2009" name="J. Bacteriol.">
        <title>The genome of Burkholderia cenocepacia J2315, an epidemic pathogen of cystic fibrosis patients.</title>
        <authorList>
            <person name="Holden M.T."/>
            <person name="Seth-Smith H.M."/>
            <person name="Crossman L.C."/>
            <person name="Sebaihia M."/>
            <person name="Bentley S.D."/>
            <person name="Cerdeno-Tarraga A.M."/>
            <person name="Thomson N.R."/>
            <person name="Bason N."/>
            <person name="Quail M.A."/>
            <person name="Sharp S."/>
            <person name="Cherevach I."/>
            <person name="Churcher C."/>
            <person name="Goodhead I."/>
            <person name="Hauser H."/>
            <person name="Holroyd N."/>
            <person name="Mungall K."/>
            <person name="Scott P."/>
            <person name="Walker D."/>
            <person name="White B."/>
            <person name="Rose H."/>
            <person name="Iversen P."/>
            <person name="Mil-Homens D."/>
            <person name="Rocha E.P."/>
            <person name="Fialho A.M."/>
            <person name="Baldwin A."/>
            <person name="Dowson C."/>
            <person name="Barrell B.G."/>
            <person name="Govan J.R."/>
            <person name="Vandamme P."/>
            <person name="Hart C.A."/>
            <person name="Mahenthiralingam E."/>
            <person name="Parkhill J."/>
        </authorList>
    </citation>
    <scope>NUCLEOTIDE SEQUENCE [LARGE SCALE GENOMIC DNA]</scope>
    <source>
        <strain>ATCC BAA-245 / DSM 16553 / LMG 16656 / NCTC 13227 / J2315 / CF5610</strain>
    </source>
</reference>
<organism>
    <name type="scientific">Burkholderia cenocepacia (strain ATCC BAA-245 / DSM 16553 / LMG 16656 / NCTC 13227 / J2315 / CF5610)</name>
    <name type="common">Burkholderia cepacia (strain J2315)</name>
    <dbReference type="NCBI Taxonomy" id="216591"/>
    <lineage>
        <taxon>Bacteria</taxon>
        <taxon>Pseudomonadati</taxon>
        <taxon>Pseudomonadota</taxon>
        <taxon>Betaproteobacteria</taxon>
        <taxon>Burkholderiales</taxon>
        <taxon>Burkholderiaceae</taxon>
        <taxon>Burkholderia</taxon>
        <taxon>Burkholderia cepacia complex</taxon>
    </lineage>
</organism>
<protein>
    <recommendedName>
        <fullName evidence="1">tRNA uridine(34) hydroxylase</fullName>
        <ecNumber evidence="1">1.14.-.-</ecNumber>
    </recommendedName>
    <alternativeName>
        <fullName evidence="1">tRNA hydroxylation protein O</fullName>
    </alternativeName>
</protein>
<gene>
    <name evidence="1" type="primary">trhO</name>
    <name type="ordered locus">BceJ2315_23700</name>
    <name type="ORF">BCAL2410</name>
</gene>
<keyword id="KW-0560">Oxidoreductase</keyword>
<keyword id="KW-0819">tRNA processing</keyword>
<sequence length="284" mass="31603">MTIVNLAAYHFVSLDANEQWRPLVTARCNELGLRGTILLAPEGINLFIAGTREATDAFIAYIRHDPLFEGKFATLQFKESLSDSQPFRRMLVRLKREIITMKKPAIKPELGRAPFVDARTLKSWLDRGHDDTGRPVVMLDTRNAFEVDVGTFDNALDYRIDKFSEFPEVIDANRADLEGKTVVSFCTGGIRCEKAAIHMKEIGIDNVYQLEGGILKYFEEVGGAHYHGDCFVFDYRTALNPQLQPTENVTCFACRAVVTPEAQRSPSYVAGKSCPACAQAASAA</sequence>
<name>TRHO_BURCJ</name>
<feature type="chain" id="PRO_1000200346" description="tRNA uridine(34) hydroxylase">
    <location>
        <begin position="1"/>
        <end position="284"/>
    </location>
</feature>
<feature type="domain" description="Rhodanese" evidence="1">
    <location>
        <begin position="132"/>
        <end position="226"/>
    </location>
</feature>
<feature type="active site" description="Cysteine persulfide intermediate" evidence="1">
    <location>
        <position position="186"/>
    </location>
</feature>
<accession>B4E6D6</accession>
<evidence type="ECO:0000255" key="1">
    <source>
        <dbReference type="HAMAP-Rule" id="MF_00469"/>
    </source>
</evidence>
<dbReference type="EC" id="1.14.-.-" evidence="1"/>
<dbReference type="EMBL" id="AM747720">
    <property type="protein sequence ID" value="CAR52711.1"/>
    <property type="molecule type" value="Genomic_DNA"/>
</dbReference>
<dbReference type="RefSeq" id="WP_006489627.1">
    <property type="nucleotide sequence ID" value="NC_011000.1"/>
</dbReference>
<dbReference type="SMR" id="B4E6D6"/>
<dbReference type="KEGG" id="bcj:BCAL2410"/>
<dbReference type="eggNOG" id="COG1054">
    <property type="taxonomic scope" value="Bacteria"/>
</dbReference>
<dbReference type="HOGENOM" id="CLU_038878_0_1_4"/>
<dbReference type="BioCyc" id="BCEN216591:G1G1V-2658-MONOMER"/>
<dbReference type="Proteomes" id="UP000001035">
    <property type="component" value="Chromosome 1"/>
</dbReference>
<dbReference type="GO" id="GO:0016705">
    <property type="term" value="F:oxidoreductase activity, acting on paired donors, with incorporation or reduction of molecular oxygen"/>
    <property type="evidence" value="ECO:0007669"/>
    <property type="project" value="UniProtKB-UniRule"/>
</dbReference>
<dbReference type="GO" id="GO:0006400">
    <property type="term" value="P:tRNA modification"/>
    <property type="evidence" value="ECO:0007669"/>
    <property type="project" value="UniProtKB-UniRule"/>
</dbReference>
<dbReference type="CDD" id="cd01518">
    <property type="entry name" value="RHOD_YceA"/>
    <property type="match status" value="1"/>
</dbReference>
<dbReference type="Gene3D" id="3.30.70.100">
    <property type="match status" value="1"/>
</dbReference>
<dbReference type="Gene3D" id="3.40.250.10">
    <property type="entry name" value="Rhodanese-like domain"/>
    <property type="match status" value="1"/>
</dbReference>
<dbReference type="HAMAP" id="MF_00469">
    <property type="entry name" value="TrhO"/>
    <property type="match status" value="1"/>
</dbReference>
<dbReference type="InterPro" id="IPR001763">
    <property type="entry name" value="Rhodanese-like_dom"/>
</dbReference>
<dbReference type="InterPro" id="IPR036873">
    <property type="entry name" value="Rhodanese-like_dom_sf"/>
</dbReference>
<dbReference type="InterPro" id="IPR020936">
    <property type="entry name" value="TrhO"/>
</dbReference>
<dbReference type="InterPro" id="IPR040503">
    <property type="entry name" value="TRHO_N"/>
</dbReference>
<dbReference type="NCBIfam" id="NF003703">
    <property type="entry name" value="PRK05320.1"/>
    <property type="match status" value="1"/>
</dbReference>
<dbReference type="PANTHER" id="PTHR43268:SF3">
    <property type="entry name" value="RHODANESE-LIKE DOMAIN-CONTAINING PROTEIN 7-RELATED"/>
    <property type="match status" value="1"/>
</dbReference>
<dbReference type="PANTHER" id="PTHR43268">
    <property type="entry name" value="THIOSULFATE SULFURTRANSFERASE/RHODANESE-LIKE DOMAIN-CONTAINING PROTEIN 2"/>
    <property type="match status" value="1"/>
</dbReference>
<dbReference type="Pfam" id="PF00581">
    <property type="entry name" value="Rhodanese"/>
    <property type="match status" value="1"/>
</dbReference>
<dbReference type="Pfam" id="PF17773">
    <property type="entry name" value="UPF0176_N"/>
    <property type="match status" value="1"/>
</dbReference>
<dbReference type="SMART" id="SM00450">
    <property type="entry name" value="RHOD"/>
    <property type="match status" value="1"/>
</dbReference>
<dbReference type="SUPFAM" id="SSF52821">
    <property type="entry name" value="Rhodanese/Cell cycle control phosphatase"/>
    <property type="match status" value="1"/>
</dbReference>
<dbReference type="PROSITE" id="PS50206">
    <property type="entry name" value="RHODANESE_3"/>
    <property type="match status" value="1"/>
</dbReference>
<comment type="function">
    <text evidence="1">Catalyzes oxygen-dependent 5-hydroxyuridine (ho5U) modification at position 34 in tRNAs.</text>
</comment>
<comment type="catalytic activity">
    <reaction evidence="1">
        <text>uridine(34) in tRNA + AH2 + O2 = 5-hydroxyuridine(34) in tRNA + A + H2O</text>
        <dbReference type="Rhea" id="RHEA:64224"/>
        <dbReference type="Rhea" id="RHEA-COMP:11727"/>
        <dbReference type="Rhea" id="RHEA-COMP:13381"/>
        <dbReference type="ChEBI" id="CHEBI:13193"/>
        <dbReference type="ChEBI" id="CHEBI:15377"/>
        <dbReference type="ChEBI" id="CHEBI:15379"/>
        <dbReference type="ChEBI" id="CHEBI:17499"/>
        <dbReference type="ChEBI" id="CHEBI:65315"/>
        <dbReference type="ChEBI" id="CHEBI:136877"/>
    </reaction>
</comment>
<comment type="similarity">
    <text evidence="1">Belongs to the TrhO family.</text>
</comment>
<proteinExistence type="inferred from homology"/>